<reference key="1">
    <citation type="journal article" date="1996" name="Nature">
        <title>Pituitary lineage determination by the Prophet of Pit-1 homeodomain factor defective in Ames dwarfism.</title>
        <authorList>
            <person name="Sornson M.W."/>
            <person name="Wu W."/>
            <person name="Dasen J.S."/>
            <person name="Flynn S.E."/>
            <person name="Norman D.J."/>
            <person name="O'Connell S.M."/>
            <person name="Gukovsky I."/>
            <person name="Carriere C."/>
            <person name="Ryan A.K."/>
            <person name="Miller A.P."/>
            <person name="Zuo L."/>
            <person name="Gleiberman A.S."/>
            <person name="Andersen B."/>
            <person name="Beamer W.G."/>
            <person name="Rosenfeld M.G."/>
        </authorList>
    </citation>
    <scope>NUCLEOTIDE SEQUENCE [MRNA]</scope>
</reference>
<reference key="2">
    <citation type="journal article" date="2009" name="PLoS Biol.">
        <title>Lineage-specific biology revealed by a finished genome assembly of the mouse.</title>
        <authorList>
            <person name="Church D.M."/>
            <person name="Goodstadt L."/>
            <person name="Hillier L.W."/>
            <person name="Zody M.C."/>
            <person name="Goldstein S."/>
            <person name="She X."/>
            <person name="Bult C.J."/>
            <person name="Agarwala R."/>
            <person name="Cherry J.L."/>
            <person name="DiCuccio M."/>
            <person name="Hlavina W."/>
            <person name="Kapustin Y."/>
            <person name="Meric P."/>
            <person name="Maglott D."/>
            <person name="Birtle Z."/>
            <person name="Marques A.C."/>
            <person name="Graves T."/>
            <person name="Zhou S."/>
            <person name="Teague B."/>
            <person name="Potamousis K."/>
            <person name="Churas C."/>
            <person name="Place M."/>
            <person name="Herschleb J."/>
            <person name="Runnheim R."/>
            <person name="Forrest D."/>
            <person name="Amos-Landgraf J."/>
            <person name="Schwartz D.C."/>
            <person name="Cheng Z."/>
            <person name="Lindblad-Toh K."/>
            <person name="Eichler E.E."/>
            <person name="Ponting C.P."/>
        </authorList>
    </citation>
    <scope>NUCLEOTIDE SEQUENCE [LARGE SCALE GENOMIC DNA]</scope>
    <source>
        <strain>C57BL/6J</strain>
    </source>
</reference>
<reference key="3">
    <citation type="journal article" date="2000" name="J. Clin. Endocrinol. Metab.">
        <title>Combined pituitary hormone deficiency caused by a novel mutation of a highly conserved residue (F88S) in the homeodomain of PROP-1.</title>
        <authorList>
            <person name="Osorio M.G."/>
            <person name="Kopp P."/>
            <person name="Marui S."/>
            <person name="Latronico A.C."/>
            <person name="Mendonca B.B."/>
            <person name="Arnhold I.J."/>
        </authorList>
    </citation>
    <scope>MUTAGENESIS OF SER-83 AND PHE-85</scope>
</reference>
<organism>
    <name type="scientific">Mus musculus</name>
    <name type="common">Mouse</name>
    <dbReference type="NCBI Taxonomy" id="10090"/>
    <lineage>
        <taxon>Eukaryota</taxon>
        <taxon>Metazoa</taxon>
        <taxon>Chordata</taxon>
        <taxon>Craniata</taxon>
        <taxon>Vertebrata</taxon>
        <taxon>Euteleostomi</taxon>
        <taxon>Mammalia</taxon>
        <taxon>Eutheria</taxon>
        <taxon>Euarchontoglires</taxon>
        <taxon>Glires</taxon>
        <taxon>Rodentia</taxon>
        <taxon>Myomorpha</taxon>
        <taxon>Muroidea</taxon>
        <taxon>Muridae</taxon>
        <taxon>Murinae</taxon>
        <taxon>Mus</taxon>
        <taxon>Mus</taxon>
    </lineage>
</organism>
<gene>
    <name type="primary">Prop1</name>
    <name type="synonym">Prop-1</name>
</gene>
<keyword id="KW-0238">DNA-binding</keyword>
<keyword id="KW-0371">Homeobox</keyword>
<keyword id="KW-0539">Nucleus</keyword>
<keyword id="KW-1185">Reference proteome</keyword>
<feature type="chain" id="PRO_0000049272" description="Homeobox protein prophet of Pit-1">
    <location>
        <begin position="1"/>
        <end position="223"/>
    </location>
</feature>
<feature type="DNA-binding region" description="Homeobox" evidence="1">
    <location>
        <begin position="66"/>
        <end position="125"/>
    </location>
</feature>
<feature type="region of interest" description="Disordered" evidence="2">
    <location>
        <begin position="1"/>
        <end position="69"/>
    </location>
</feature>
<feature type="region of interest" description="Disordered" evidence="2">
    <location>
        <begin position="168"/>
        <end position="223"/>
    </location>
</feature>
<feature type="compositionally biased region" description="Basic and acidic residues" evidence="2">
    <location>
        <begin position="1"/>
        <end position="13"/>
    </location>
</feature>
<feature type="compositionally biased region" description="Polar residues" evidence="2">
    <location>
        <begin position="171"/>
        <end position="180"/>
    </location>
</feature>
<feature type="mutagenesis site" description="Shows very weak DNA binding to a Prop1 response element in gel shift assays; transcriptional activation of a luciferase reporter gene is reduced to 43% compared with that of wild-type Prop1 in transiently transfected human embryonic kidney cells." evidence="3">
    <original>S</original>
    <variation>P</variation>
    <location>
        <position position="83"/>
    </location>
</feature>
<feature type="mutagenesis site" description="Shows no significant DNA binding to a Prop1 response element in gel shift assays; transcriptional activation of a luciferase reporter gene is reduced to approximately 34% compared with that of wild-type Prop1 in transiently transfected human embryonic kidney cells." evidence="3">
    <original>F</original>
    <variation>S</variation>
    <location>
        <position position="85"/>
    </location>
</feature>
<proteinExistence type="evidence at protein level"/>
<dbReference type="EMBL" id="U77946">
    <property type="protein sequence ID" value="AAB38884.1"/>
    <property type="molecule type" value="mRNA"/>
</dbReference>
<dbReference type="EMBL" id="AL627215">
    <property type="status" value="NOT_ANNOTATED_CDS"/>
    <property type="molecule type" value="Genomic_DNA"/>
</dbReference>
<dbReference type="CCDS" id="CCDS24643.1"/>
<dbReference type="RefSeq" id="NP_032962.1">
    <property type="nucleotide sequence ID" value="NM_008936.2"/>
</dbReference>
<dbReference type="SMR" id="P97458"/>
<dbReference type="BioGRID" id="202394">
    <property type="interactions" value="4"/>
</dbReference>
<dbReference type="FunCoup" id="P97458">
    <property type="interactions" value="133"/>
</dbReference>
<dbReference type="IntAct" id="P97458">
    <property type="interactions" value="1"/>
</dbReference>
<dbReference type="STRING" id="10090.ENSMUSP00000057231"/>
<dbReference type="PhosphoSitePlus" id="P97458"/>
<dbReference type="jPOST" id="P97458"/>
<dbReference type="PaxDb" id="10090-ENSMUSP00000057231"/>
<dbReference type="Antibodypedia" id="29400">
    <property type="antibodies" value="108 antibodies from 25 providers"/>
</dbReference>
<dbReference type="DNASU" id="19127"/>
<dbReference type="Ensembl" id="ENSMUST00000051159.3">
    <property type="protein sequence ID" value="ENSMUSP00000057231.2"/>
    <property type="gene ID" value="ENSMUSG00000044542.4"/>
</dbReference>
<dbReference type="GeneID" id="19127"/>
<dbReference type="KEGG" id="mmu:19127"/>
<dbReference type="UCSC" id="uc007itg.1">
    <property type="organism name" value="mouse"/>
</dbReference>
<dbReference type="AGR" id="MGI:109330"/>
<dbReference type="CTD" id="5626"/>
<dbReference type="MGI" id="MGI:109330">
    <property type="gene designation" value="Prop1"/>
</dbReference>
<dbReference type="VEuPathDB" id="HostDB:ENSMUSG00000044542"/>
<dbReference type="eggNOG" id="KOG0490">
    <property type="taxonomic scope" value="Eukaryota"/>
</dbReference>
<dbReference type="GeneTree" id="ENSGT00940000162292"/>
<dbReference type="HOGENOM" id="CLU_044912_1_0_1"/>
<dbReference type="InParanoid" id="P97458"/>
<dbReference type="OMA" id="PEDWYPT"/>
<dbReference type="OrthoDB" id="6159439at2759"/>
<dbReference type="PhylomeDB" id="P97458"/>
<dbReference type="TreeFam" id="TF315976"/>
<dbReference type="BioGRID-ORCS" id="19127">
    <property type="hits" value="2 hits in 77 CRISPR screens"/>
</dbReference>
<dbReference type="PRO" id="PR:P97458"/>
<dbReference type="Proteomes" id="UP000000589">
    <property type="component" value="Chromosome 11"/>
</dbReference>
<dbReference type="RNAct" id="P97458">
    <property type="molecule type" value="protein"/>
</dbReference>
<dbReference type="Bgee" id="ENSMUSG00000044542">
    <property type="expression patterns" value="Expressed in adenohypophysis and 12 other cell types or tissues"/>
</dbReference>
<dbReference type="ExpressionAtlas" id="P97458">
    <property type="expression patterns" value="baseline and differential"/>
</dbReference>
<dbReference type="GO" id="GO:0005634">
    <property type="term" value="C:nucleus"/>
    <property type="evidence" value="ECO:0007669"/>
    <property type="project" value="UniProtKB-SubCell"/>
</dbReference>
<dbReference type="GO" id="GO:0005667">
    <property type="term" value="C:transcription regulator complex"/>
    <property type="evidence" value="ECO:0000314"/>
    <property type="project" value="MGI"/>
</dbReference>
<dbReference type="GO" id="GO:0008013">
    <property type="term" value="F:beta-catenin binding"/>
    <property type="evidence" value="ECO:0000353"/>
    <property type="project" value="MGI"/>
</dbReference>
<dbReference type="GO" id="GO:0003682">
    <property type="term" value="F:chromatin binding"/>
    <property type="evidence" value="ECO:0000314"/>
    <property type="project" value="MGI"/>
</dbReference>
<dbReference type="GO" id="GO:0001228">
    <property type="term" value="F:DNA-binding transcription activator activity, RNA polymerase II-specific"/>
    <property type="evidence" value="ECO:0000314"/>
    <property type="project" value="NTNU_SB"/>
</dbReference>
<dbReference type="GO" id="GO:0001227">
    <property type="term" value="F:DNA-binding transcription repressor activity, RNA polymerase II-specific"/>
    <property type="evidence" value="ECO:0000314"/>
    <property type="project" value="NTNU_SB"/>
</dbReference>
<dbReference type="GO" id="GO:0000978">
    <property type="term" value="F:RNA polymerase II cis-regulatory region sequence-specific DNA binding"/>
    <property type="evidence" value="ECO:0000314"/>
    <property type="project" value="NTNU_SB"/>
</dbReference>
<dbReference type="GO" id="GO:0021984">
    <property type="term" value="P:adenohypophysis development"/>
    <property type="evidence" value="ECO:0000315"/>
    <property type="project" value="MGI"/>
</dbReference>
<dbReference type="GO" id="GO:0009887">
    <property type="term" value="P:animal organ morphogenesis"/>
    <property type="evidence" value="ECO:0000315"/>
    <property type="project" value="MGI"/>
</dbReference>
<dbReference type="GO" id="GO:0006915">
    <property type="term" value="P:apoptotic process"/>
    <property type="evidence" value="ECO:0000315"/>
    <property type="project" value="MGI"/>
</dbReference>
<dbReference type="GO" id="GO:0001568">
    <property type="term" value="P:blood vessel development"/>
    <property type="evidence" value="ECO:0000315"/>
    <property type="project" value="MGI"/>
</dbReference>
<dbReference type="GO" id="GO:0016477">
    <property type="term" value="P:cell migration"/>
    <property type="evidence" value="ECO:0000316"/>
    <property type="project" value="MGI"/>
</dbReference>
<dbReference type="GO" id="GO:0009953">
    <property type="term" value="P:dorsal/ventral pattern formation"/>
    <property type="evidence" value="ECO:0000315"/>
    <property type="project" value="MGI"/>
</dbReference>
<dbReference type="GO" id="GO:0048732">
    <property type="term" value="P:gland development"/>
    <property type="evidence" value="ECO:0000315"/>
    <property type="project" value="MGI"/>
</dbReference>
<dbReference type="GO" id="GO:0048850">
    <property type="term" value="P:hypophysis morphogenesis"/>
    <property type="evidence" value="ECO:0000315"/>
    <property type="project" value="MGI"/>
</dbReference>
<dbReference type="GO" id="GO:0021979">
    <property type="term" value="P:hypothalamus cell differentiation"/>
    <property type="evidence" value="ECO:0000315"/>
    <property type="project" value="MGI"/>
</dbReference>
<dbReference type="GO" id="GO:0043066">
    <property type="term" value="P:negative regulation of apoptotic process"/>
    <property type="evidence" value="ECO:0000315"/>
    <property type="project" value="MGI"/>
</dbReference>
<dbReference type="GO" id="GO:0000122">
    <property type="term" value="P:negative regulation of transcription by RNA polymerase II"/>
    <property type="evidence" value="ECO:0000314"/>
    <property type="project" value="NTNU_SB"/>
</dbReference>
<dbReference type="GO" id="GO:0021983">
    <property type="term" value="P:pituitary gland development"/>
    <property type="evidence" value="ECO:0000315"/>
    <property type="project" value="MGI"/>
</dbReference>
<dbReference type="GO" id="GO:0045944">
    <property type="term" value="P:positive regulation of transcription by RNA polymerase II"/>
    <property type="evidence" value="ECO:0000314"/>
    <property type="project" value="MGI"/>
</dbReference>
<dbReference type="GO" id="GO:0060126">
    <property type="term" value="P:somatotropin secreting cell differentiation"/>
    <property type="evidence" value="ECO:0000315"/>
    <property type="project" value="MGI"/>
</dbReference>
<dbReference type="CDD" id="cd00086">
    <property type="entry name" value="homeodomain"/>
    <property type="match status" value="1"/>
</dbReference>
<dbReference type="FunFam" id="1.10.10.60:FF:000138">
    <property type="entry name" value="Homeobox protein prophet of Pit-1"/>
    <property type="match status" value="1"/>
</dbReference>
<dbReference type="Gene3D" id="1.10.10.60">
    <property type="entry name" value="Homeodomain-like"/>
    <property type="match status" value="1"/>
</dbReference>
<dbReference type="InterPro" id="IPR001356">
    <property type="entry name" value="HD"/>
</dbReference>
<dbReference type="InterPro" id="IPR017970">
    <property type="entry name" value="Homeobox_CS"/>
</dbReference>
<dbReference type="InterPro" id="IPR009057">
    <property type="entry name" value="Homeodomain-like_sf"/>
</dbReference>
<dbReference type="InterPro" id="IPR042412">
    <property type="entry name" value="PROP1"/>
</dbReference>
<dbReference type="PANTHER" id="PTHR47409">
    <property type="entry name" value="HOMEOBOX PROTEIN PROPHET OF PIT-1"/>
    <property type="match status" value="1"/>
</dbReference>
<dbReference type="PANTHER" id="PTHR47409:SF1">
    <property type="entry name" value="HOMEOBOX PROTEIN PROPHET OF PIT-1"/>
    <property type="match status" value="1"/>
</dbReference>
<dbReference type="Pfam" id="PF00046">
    <property type="entry name" value="Homeodomain"/>
    <property type="match status" value="1"/>
</dbReference>
<dbReference type="SMART" id="SM00389">
    <property type="entry name" value="HOX"/>
    <property type="match status" value="1"/>
</dbReference>
<dbReference type="SUPFAM" id="SSF46689">
    <property type="entry name" value="Homeodomain-like"/>
    <property type="match status" value="1"/>
</dbReference>
<dbReference type="PROSITE" id="PS00027">
    <property type="entry name" value="HOMEOBOX_1"/>
    <property type="match status" value="1"/>
</dbReference>
<dbReference type="PROSITE" id="PS50071">
    <property type="entry name" value="HOMEOBOX_2"/>
    <property type="match status" value="1"/>
</dbReference>
<evidence type="ECO:0000255" key="1">
    <source>
        <dbReference type="PROSITE-ProRule" id="PRU00108"/>
    </source>
</evidence>
<evidence type="ECO:0000256" key="2">
    <source>
        <dbReference type="SAM" id="MobiDB-lite"/>
    </source>
</evidence>
<evidence type="ECO:0000269" key="3">
    <source>
    </source>
</evidence>
<evidence type="ECO:0000305" key="4"/>
<name>PROP1_MOUSE</name>
<sequence length="223" mass="25025">MEAQRRSHQEKQTKGHACGRSLPEPRVASGTLISTVDRSSEAYRRLSGTELGRPKLCPQRGRPHSRRRHRTTFNPAQLEQLESAFGRNQYPDIWAREGLAQDTGLSEARIQVWFQNRRAKQRKQERSLLQPIAHLSTATFSGFLPESSAYPYTYGTPPPPAPCFPHPYSHSLPSQPSTAASLALPPQPEDWYPTLHPAPTGHLPCPPPPPMFPLSLETPKSWN</sequence>
<comment type="function">
    <text>Possibly involved in the ontogenesis of pituitary gonadotropes, as well as somatotropes, lactotropes and caudomedial thyrotropes.</text>
</comment>
<comment type="interaction">
    <interactant intactId="EBI-937831">
        <id>P97458</id>
    </interactant>
    <interactant intactId="EBI-397872">
        <id>Q02248</id>
        <label>Ctnnb1</label>
    </interactant>
    <organismsDiffer>false</organismsDiffer>
    <experiments>2</experiments>
</comment>
<comment type="subcellular location">
    <subcellularLocation>
        <location evidence="1">Nucleus</location>
    </subcellularLocation>
</comment>
<comment type="similarity">
    <text evidence="4">Belongs to the paired homeobox family.</text>
</comment>
<accession>P97458</accession>
<accession>Q5NCG9</accession>
<protein>
    <recommendedName>
        <fullName>Homeobox protein prophet of Pit-1</fullName>
        <shortName>PROP-1</shortName>
    </recommendedName>
    <alternativeName>
        <fullName>Pituitary-specific homeodomain factor</fullName>
    </alternativeName>
</protein>